<protein>
    <recommendedName>
        <fullName evidence="1">Large ribosomal subunit protein bL32C</fullName>
    </recommendedName>
    <alternativeName>
        <fullName evidence="2">50S ribosomal protein L32 3</fullName>
    </alternativeName>
</protein>
<accession>Q836R0</accession>
<comment type="similarity">
    <text evidence="2">Belongs to the bacterial ribosomal protein bL32 family.</text>
</comment>
<name>RL323_ENTFA</name>
<keyword id="KW-0002">3D-structure</keyword>
<keyword id="KW-1185">Reference proteome</keyword>
<keyword id="KW-0687">Ribonucleoprotein</keyword>
<keyword id="KW-0689">Ribosomal protein</keyword>
<dbReference type="EMBL" id="AE016830">
    <property type="protein sequence ID" value="AAO80851.1"/>
    <property type="molecule type" value="Genomic_DNA"/>
</dbReference>
<dbReference type="RefSeq" id="NP_814781.1">
    <property type="nucleotide sequence ID" value="NC_004668.1"/>
</dbReference>
<dbReference type="PDB" id="6WU9">
    <property type="method" value="EM"/>
    <property type="resolution" value="2.90 A"/>
    <property type="chains" value="2=2-57"/>
</dbReference>
<dbReference type="PDB" id="7P7Q">
    <property type="method" value="EM"/>
    <property type="resolution" value="2.40 A"/>
    <property type="chains" value="4=1-59"/>
</dbReference>
<dbReference type="PDB" id="7P7R">
    <property type="method" value="EM"/>
    <property type="resolution" value="2.90 A"/>
    <property type="chains" value="4=1-59"/>
</dbReference>
<dbReference type="PDBsum" id="6WU9"/>
<dbReference type="PDBsum" id="7P7Q"/>
<dbReference type="PDBsum" id="7P7R"/>
<dbReference type="EMDB" id="EMD-13241"/>
<dbReference type="EMDB" id="EMD-13242"/>
<dbReference type="SMR" id="Q836R0"/>
<dbReference type="STRING" id="226185.EF_1048"/>
<dbReference type="EnsemblBacteria" id="AAO80851">
    <property type="protein sequence ID" value="AAO80851"/>
    <property type="gene ID" value="EF_1048"/>
</dbReference>
<dbReference type="KEGG" id="efa:EF1048"/>
<dbReference type="PATRIC" id="fig|226185.45.peg.3253"/>
<dbReference type="eggNOG" id="COG0333">
    <property type="taxonomic scope" value="Bacteria"/>
</dbReference>
<dbReference type="HOGENOM" id="CLU_129084_1_3_9"/>
<dbReference type="Proteomes" id="UP000001415">
    <property type="component" value="Chromosome"/>
</dbReference>
<dbReference type="GO" id="GO:0015934">
    <property type="term" value="C:large ribosomal subunit"/>
    <property type="evidence" value="ECO:0007669"/>
    <property type="project" value="InterPro"/>
</dbReference>
<dbReference type="GO" id="GO:0003735">
    <property type="term" value="F:structural constituent of ribosome"/>
    <property type="evidence" value="ECO:0007669"/>
    <property type="project" value="InterPro"/>
</dbReference>
<dbReference type="GO" id="GO:0006412">
    <property type="term" value="P:translation"/>
    <property type="evidence" value="ECO:0007669"/>
    <property type="project" value="UniProtKB-UniRule"/>
</dbReference>
<dbReference type="HAMAP" id="MF_00340">
    <property type="entry name" value="Ribosomal_bL32"/>
    <property type="match status" value="1"/>
</dbReference>
<dbReference type="InterPro" id="IPR002677">
    <property type="entry name" value="Ribosomal_bL32"/>
</dbReference>
<dbReference type="InterPro" id="IPR044957">
    <property type="entry name" value="Ribosomal_bL32_bact"/>
</dbReference>
<dbReference type="InterPro" id="IPR011332">
    <property type="entry name" value="Ribosomal_zn-bd"/>
</dbReference>
<dbReference type="NCBIfam" id="TIGR01031">
    <property type="entry name" value="rpmF_bact"/>
    <property type="match status" value="1"/>
</dbReference>
<dbReference type="PANTHER" id="PTHR35534">
    <property type="entry name" value="50S RIBOSOMAL PROTEIN L32"/>
    <property type="match status" value="1"/>
</dbReference>
<dbReference type="PANTHER" id="PTHR35534:SF2">
    <property type="entry name" value="LARGE RIBOSOMAL SUBUNIT PROTEIN BL32"/>
    <property type="match status" value="1"/>
</dbReference>
<dbReference type="Pfam" id="PF01783">
    <property type="entry name" value="Ribosomal_L32p"/>
    <property type="match status" value="1"/>
</dbReference>
<dbReference type="SUPFAM" id="SSF57829">
    <property type="entry name" value="Zn-binding ribosomal proteins"/>
    <property type="match status" value="1"/>
</dbReference>
<reference key="1">
    <citation type="journal article" date="2003" name="Science">
        <title>Role of mobile DNA in the evolution of vancomycin-resistant Enterococcus faecalis.</title>
        <authorList>
            <person name="Paulsen I.T."/>
            <person name="Banerjei L."/>
            <person name="Myers G.S.A."/>
            <person name="Nelson K.E."/>
            <person name="Seshadri R."/>
            <person name="Read T.D."/>
            <person name="Fouts D.E."/>
            <person name="Eisen J.A."/>
            <person name="Gill S.R."/>
            <person name="Heidelberg J.F."/>
            <person name="Tettelin H."/>
            <person name="Dodson R.J."/>
            <person name="Umayam L.A."/>
            <person name="Brinkac L.M."/>
            <person name="Beanan M.J."/>
            <person name="Daugherty S.C."/>
            <person name="DeBoy R.T."/>
            <person name="Durkin S.A."/>
            <person name="Kolonay J.F."/>
            <person name="Madupu R."/>
            <person name="Nelson W.C."/>
            <person name="Vamathevan J.J."/>
            <person name="Tran B."/>
            <person name="Upton J."/>
            <person name="Hansen T."/>
            <person name="Shetty J."/>
            <person name="Khouri H.M."/>
            <person name="Utterback T.R."/>
            <person name="Radune D."/>
            <person name="Ketchum K.A."/>
            <person name="Dougherty B.A."/>
            <person name="Fraser C.M."/>
        </authorList>
    </citation>
    <scope>NUCLEOTIDE SEQUENCE [LARGE SCALE GENOMIC DNA]</scope>
    <source>
        <strain>ATCC 700802 / V583</strain>
    </source>
</reference>
<feature type="chain" id="PRO_0000172342" description="Large ribosomal subunit protein bL32C">
    <location>
        <begin position="1"/>
        <end position="59"/>
    </location>
</feature>
<feature type="helix" evidence="3">
    <location>
        <begin position="10"/>
        <end position="16"/>
    </location>
</feature>
<feature type="helix" evidence="3">
    <location>
        <begin position="17"/>
        <end position="19"/>
    </location>
</feature>
<feature type="strand" evidence="3">
    <location>
        <begin position="27"/>
        <end position="29"/>
    </location>
</feature>
<feature type="turn" evidence="3">
    <location>
        <begin position="31"/>
        <end position="33"/>
    </location>
</feature>
<feature type="strand" evidence="3">
    <location>
        <begin position="36"/>
        <end position="38"/>
    </location>
</feature>
<feature type="turn" evidence="3">
    <location>
        <begin position="44"/>
        <end position="46"/>
    </location>
</feature>
<proteinExistence type="evidence at protein level"/>
<sequence length="59" mass="6531">MAVPARRTSKAKKAKRRTHYKLTIKGLNACSNCGEMKKSHHVCPACGHYDGKDVMSKEA</sequence>
<organism>
    <name type="scientific">Enterococcus faecalis (strain ATCC 700802 / V583)</name>
    <dbReference type="NCBI Taxonomy" id="226185"/>
    <lineage>
        <taxon>Bacteria</taxon>
        <taxon>Bacillati</taxon>
        <taxon>Bacillota</taxon>
        <taxon>Bacilli</taxon>
        <taxon>Lactobacillales</taxon>
        <taxon>Enterococcaceae</taxon>
        <taxon>Enterococcus</taxon>
    </lineage>
</organism>
<gene>
    <name type="primary">rpmF3</name>
    <name type="synonym">rpmF-3</name>
    <name type="ordered locus">EF_1048</name>
</gene>
<evidence type="ECO:0000255" key="1">
    <source>
        <dbReference type="HAMAP-Rule" id="MF_00340"/>
    </source>
</evidence>
<evidence type="ECO:0000305" key="2"/>
<evidence type="ECO:0007829" key="3">
    <source>
        <dbReference type="PDB" id="6WU9"/>
    </source>
</evidence>